<proteinExistence type="inferred from homology"/>
<name>ATPE_MYCSK</name>
<accession>A1UJY3</accession>
<sequence>MADLDVDIVAVEREIWSGKATFVFTRTTSGEIGILPRHIPLVAQLVDDAMVRVEREGEEDLRVAVGGGFMSVTESGVIILAETAELESEINADEARRDSESDDPATAARGRARLRALGQID</sequence>
<reference key="1">
    <citation type="submission" date="2006-12" db="EMBL/GenBank/DDBJ databases">
        <title>Complete sequence of chromosome of Mycobacterium sp. KMS.</title>
        <authorList>
            <consortium name="US DOE Joint Genome Institute"/>
            <person name="Copeland A."/>
            <person name="Lucas S."/>
            <person name="Lapidus A."/>
            <person name="Barry K."/>
            <person name="Detter J.C."/>
            <person name="Glavina del Rio T."/>
            <person name="Hammon N."/>
            <person name="Israni S."/>
            <person name="Dalin E."/>
            <person name="Tice H."/>
            <person name="Pitluck S."/>
            <person name="Kiss H."/>
            <person name="Brettin T."/>
            <person name="Bruce D."/>
            <person name="Han C."/>
            <person name="Tapia R."/>
            <person name="Gilna P."/>
            <person name="Schmutz J."/>
            <person name="Larimer F."/>
            <person name="Land M."/>
            <person name="Hauser L."/>
            <person name="Kyrpides N."/>
            <person name="Mikhailova N."/>
            <person name="Miller C.D."/>
            <person name="Richardson P."/>
        </authorList>
    </citation>
    <scope>NUCLEOTIDE SEQUENCE [LARGE SCALE GENOMIC DNA]</scope>
    <source>
        <strain>KMS</strain>
    </source>
</reference>
<evidence type="ECO:0000255" key="1">
    <source>
        <dbReference type="HAMAP-Rule" id="MF_00530"/>
    </source>
</evidence>
<gene>
    <name evidence="1" type="primary">atpC</name>
    <name type="ordered locus">Mkms_3949</name>
</gene>
<organism>
    <name type="scientific">Mycobacterium sp. (strain KMS)</name>
    <dbReference type="NCBI Taxonomy" id="189918"/>
    <lineage>
        <taxon>Bacteria</taxon>
        <taxon>Bacillati</taxon>
        <taxon>Actinomycetota</taxon>
        <taxon>Actinomycetes</taxon>
        <taxon>Mycobacteriales</taxon>
        <taxon>Mycobacteriaceae</taxon>
        <taxon>Mycobacterium</taxon>
    </lineage>
</organism>
<dbReference type="EMBL" id="CP000518">
    <property type="protein sequence ID" value="ABL93141.1"/>
    <property type="molecule type" value="Genomic_DNA"/>
</dbReference>
<dbReference type="SMR" id="A1UJY3"/>
<dbReference type="STRING" id="189918.Mkms_3949"/>
<dbReference type="KEGG" id="mkm:Mkms_3949"/>
<dbReference type="HOGENOM" id="CLU_084338_4_0_11"/>
<dbReference type="OrthoDB" id="9791445at2"/>
<dbReference type="GO" id="GO:0005886">
    <property type="term" value="C:plasma membrane"/>
    <property type="evidence" value="ECO:0007669"/>
    <property type="project" value="UniProtKB-SubCell"/>
</dbReference>
<dbReference type="GO" id="GO:0045259">
    <property type="term" value="C:proton-transporting ATP synthase complex"/>
    <property type="evidence" value="ECO:0007669"/>
    <property type="project" value="UniProtKB-KW"/>
</dbReference>
<dbReference type="GO" id="GO:0005524">
    <property type="term" value="F:ATP binding"/>
    <property type="evidence" value="ECO:0007669"/>
    <property type="project" value="UniProtKB-UniRule"/>
</dbReference>
<dbReference type="GO" id="GO:0046933">
    <property type="term" value="F:proton-transporting ATP synthase activity, rotational mechanism"/>
    <property type="evidence" value="ECO:0007669"/>
    <property type="project" value="UniProtKB-UniRule"/>
</dbReference>
<dbReference type="CDD" id="cd12152">
    <property type="entry name" value="F1-ATPase_delta"/>
    <property type="match status" value="1"/>
</dbReference>
<dbReference type="Gene3D" id="2.60.15.10">
    <property type="entry name" value="F0F1 ATP synthase delta/epsilon subunit, N-terminal"/>
    <property type="match status" value="1"/>
</dbReference>
<dbReference type="HAMAP" id="MF_00530">
    <property type="entry name" value="ATP_synth_epsil_bac"/>
    <property type="match status" value="1"/>
</dbReference>
<dbReference type="InterPro" id="IPR001469">
    <property type="entry name" value="ATP_synth_F1_dsu/esu"/>
</dbReference>
<dbReference type="InterPro" id="IPR020546">
    <property type="entry name" value="ATP_synth_F1_dsu/esu_N"/>
</dbReference>
<dbReference type="InterPro" id="IPR036771">
    <property type="entry name" value="ATPsynth_dsu/esu_N"/>
</dbReference>
<dbReference type="NCBIfam" id="TIGR01216">
    <property type="entry name" value="ATP_synt_epsi"/>
    <property type="match status" value="1"/>
</dbReference>
<dbReference type="NCBIfam" id="NF009977">
    <property type="entry name" value="PRK13442.1"/>
    <property type="match status" value="1"/>
</dbReference>
<dbReference type="PANTHER" id="PTHR13822">
    <property type="entry name" value="ATP SYNTHASE DELTA/EPSILON CHAIN"/>
    <property type="match status" value="1"/>
</dbReference>
<dbReference type="PANTHER" id="PTHR13822:SF10">
    <property type="entry name" value="ATP SYNTHASE EPSILON CHAIN, CHLOROPLASTIC"/>
    <property type="match status" value="1"/>
</dbReference>
<dbReference type="Pfam" id="PF02823">
    <property type="entry name" value="ATP-synt_DE_N"/>
    <property type="match status" value="1"/>
</dbReference>
<dbReference type="SUPFAM" id="SSF51344">
    <property type="entry name" value="Epsilon subunit of F1F0-ATP synthase N-terminal domain"/>
    <property type="match status" value="1"/>
</dbReference>
<protein>
    <recommendedName>
        <fullName evidence="1">ATP synthase epsilon chain</fullName>
    </recommendedName>
    <alternativeName>
        <fullName evidence="1">ATP synthase F1 sector epsilon subunit</fullName>
    </alternativeName>
    <alternativeName>
        <fullName evidence="1">F-ATPase epsilon subunit</fullName>
    </alternativeName>
</protein>
<keyword id="KW-0066">ATP synthesis</keyword>
<keyword id="KW-1003">Cell membrane</keyword>
<keyword id="KW-0139">CF(1)</keyword>
<keyword id="KW-0375">Hydrogen ion transport</keyword>
<keyword id="KW-0406">Ion transport</keyword>
<keyword id="KW-0472">Membrane</keyword>
<keyword id="KW-0813">Transport</keyword>
<comment type="function">
    <text evidence="1">Produces ATP from ADP in the presence of a proton gradient across the membrane.</text>
</comment>
<comment type="subunit">
    <text evidence="1">F-type ATPases have 2 components, CF(1) - the catalytic core - and CF(0) - the membrane proton channel. CF(1) has five subunits: alpha(3), beta(3), gamma(1), delta(1), epsilon(1). CF(0) has three main subunits: a, b and c.</text>
</comment>
<comment type="subcellular location">
    <subcellularLocation>
        <location evidence="1">Cell membrane</location>
        <topology evidence="1">Peripheral membrane protein</topology>
    </subcellularLocation>
</comment>
<comment type="similarity">
    <text evidence="1">Belongs to the ATPase epsilon chain family.</text>
</comment>
<feature type="chain" id="PRO_1000056508" description="ATP synthase epsilon chain">
    <location>
        <begin position="1"/>
        <end position="121"/>
    </location>
</feature>